<sequence>MADGELNVDSLISRLLEVRGCRPGKIVQMTEAEVRGLCIKSREIFLSQPILLELEAPLKICGDIHGQYTDLLRLFEYGGFPPEANYLFLGDYVDRGKQSLETICLLLAYKIKYPENFFLLRGNHECASINRIYGFYDECKRRFNIKLWKTFTDCFNCLPIAAIVDEKIFCCHGGLSPDLQSMEQIRRIMRPTDVPDTGLLCDLLWSDPDKDVQGWGENDRGVSFTFGADVVSKFLNRHDLDLICRAHQVVEDGYEFFAKRQLVTLFSAPNYCGEFDNAGGMMSVDETLMCSFQILKPSEKKAKYQYGGLNSGRPVTPPRTANPPKKR</sequence>
<name>PP1B_XENLA</name>
<accession>Q6GQL2</accession>
<protein>
    <recommendedName>
        <fullName>Serine/threonine-protein phosphatase PP1-beta catalytic subunit</fullName>
        <shortName>PP-1B</shortName>
        <ecNumber>3.1.3.16</ecNumber>
    </recommendedName>
</protein>
<dbReference type="EC" id="3.1.3.16"/>
<dbReference type="EMBL" id="BC072730">
    <property type="protein sequence ID" value="AAH72730.1"/>
    <property type="molecule type" value="mRNA"/>
</dbReference>
<dbReference type="RefSeq" id="NP_001085426.1">
    <property type="nucleotide sequence ID" value="NM_001091957.1"/>
</dbReference>
<dbReference type="SMR" id="Q6GQL2"/>
<dbReference type="BioGRID" id="102015">
    <property type="interactions" value="1"/>
</dbReference>
<dbReference type="IntAct" id="Q6GQL2">
    <property type="interactions" value="2"/>
</dbReference>
<dbReference type="GeneID" id="443852"/>
<dbReference type="KEGG" id="xla:108717671"/>
<dbReference type="KEGG" id="xla:443852"/>
<dbReference type="AGR" id="Xenbase:XB-GENE-961676"/>
<dbReference type="CTD" id="108717671"/>
<dbReference type="CTD" id="443852"/>
<dbReference type="Xenbase" id="XB-GENE-961676">
    <property type="gene designation" value="ppp1cb.L"/>
</dbReference>
<dbReference type="OMA" id="APIQICG"/>
<dbReference type="OrthoDB" id="1930084at2759"/>
<dbReference type="Proteomes" id="UP000186698">
    <property type="component" value="Chromosome 5L"/>
</dbReference>
<dbReference type="Proteomes" id="UP000186698">
    <property type="component" value="Chromosome 5S"/>
</dbReference>
<dbReference type="Bgee" id="108717671">
    <property type="expression patterns" value="Expressed in camera-type eye and 19 other cell types or tissues"/>
</dbReference>
<dbReference type="GO" id="GO:0005737">
    <property type="term" value="C:cytoplasm"/>
    <property type="evidence" value="ECO:0000318"/>
    <property type="project" value="GO_Central"/>
</dbReference>
<dbReference type="GO" id="GO:0005634">
    <property type="term" value="C:nucleus"/>
    <property type="evidence" value="ECO:0000318"/>
    <property type="project" value="GO_Central"/>
</dbReference>
<dbReference type="GO" id="GO:0072357">
    <property type="term" value="C:PTW/PP1 phosphatase complex"/>
    <property type="evidence" value="ECO:0000250"/>
    <property type="project" value="UniProtKB"/>
</dbReference>
<dbReference type="GO" id="GO:0046872">
    <property type="term" value="F:metal ion binding"/>
    <property type="evidence" value="ECO:0007669"/>
    <property type="project" value="UniProtKB-KW"/>
</dbReference>
<dbReference type="GO" id="GO:0050115">
    <property type="term" value="F:myosin-light-chain-phosphatase activity"/>
    <property type="evidence" value="ECO:0000250"/>
    <property type="project" value="UniProtKB"/>
</dbReference>
<dbReference type="GO" id="GO:0004722">
    <property type="term" value="F:protein serine/threonine phosphatase activity"/>
    <property type="evidence" value="ECO:0000318"/>
    <property type="project" value="GO_Central"/>
</dbReference>
<dbReference type="GO" id="GO:0051301">
    <property type="term" value="P:cell division"/>
    <property type="evidence" value="ECO:0007669"/>
    <property type="project" value="UniProtKB-KW"/>
</dbReference>
<dbReference type="GO" id="GO:0032922">
    <property type="term" value="P:circadian regulation of gene expression"/>
    <property type="evidence" value="ECO:0000318"/>
    <property type="project" value="GO_Central"/>
</dbReference>
<dbReference type="GO" id="GO:0005977">
    <property type="term" value="P:glycogen metabolic process"/>
    <property type="evidence" value="ECO:0007669"/>
    <property type="project" value="UniProtKB-KW"/>
</dbReference>
<dbReference type="GO" id="GO:0030155">
    <property type="term" value="P:regulation of cell adhesion"/>
    <property type="evidence" value="ECO:0000250"/>
    <property type="project" value="UniProtKB"/>
</dbReference>
<dbReference type="GO" id="GO:0042752">
    <property type="term" value="P:regulation of circadian rhythm"/>
    <property type="evidence" value="ECO:0000318"/>
    <property type="project" value="GO_Central"/>
</dbReference>
<dbReference type="CDD" id="cd07414">
    <property type="entry name" value="MPP_PP1_PPKL"/>
    <property type="match status" value="1"/>
</dbReference>
<dbReference type="FunFam" id="3.60.21.10:FF:000007">
    <property type="entry name" value="Serine/threonine-protein phosphatase"/>
    <property type="match status" value="1"/>
</dbReference>
<dbReference type="Gene3D" id="3.60.21.10">
    <property type="match status" value="1"/>
</dbReference>
<dbReference type="InterPro" id="IPR004843">
    <property type="entry name" value="Calcineurin-like_PHP_ApaH"/>
</dbReference>
<dbReference type="InterPro" id="IPR029052">
    <property type="entry name" value="Metallo-depent_PP-like"/>
</dbReference>
<dbReference type="InterPro" id="IPR050341">
    <property type="entry name" value="PP1_catalytic_subunit"/>
</dbReference>
<dbReference type="InterPro" id="IPR006186">
    <property type="entry name" value="Ser/Thr-sp_prot-phosphatase"/>
</dbReference>
<dbReference type="InterPro" id="IPR031675">
    <property type="entry name" value="STPPase_N"/>
</dbReference>
<dbReference type="PANTHER" id="PTHR11668">
    <property type="entry name" value="SERINE/THREONINE PROTEIN PHOSPHATASE"/>
    <property type="match status" value="1"/>
</dbReference>
<dbReference type="PANTHER" id="PTHR11668:SF472">
    <property type="entry name" value="SERINE_THREONINE-PROTEIN PHOSPHATASE PP1-BETA CATALYTIC SUBUNIT"/>
    <property type="match status" value="1"/>
</dbReference>
<dbReference type="Pfam" id="PF00149">
    <property type="entry name" value="Metallophos"/>
    <property type="match status" value="1"/>
</dbReference>
<dbReference type="Pfam" id="PF16891">
    <property type="entry name" value="STPPase_N"/>
    <property type="match status" value="1"/>
</dbReference>
<dbReference type="PRINTS" id="PR00114">
    <property type="entry name" value="STPHPHTASE"/>
</dbReference>
<dbReference type="SMART" id="SM00156">
    <property type="entry name" value="PP2Ac"/>
    <property type="match status" value="1"/>
</dbReference>
<dbReference type="SUPFAM" id="SSF56300">
    <property type="entry name" value="Metallo-dependent phosphatases"/>
    <property type="match status" value="1"/>
</dbReference>
<dbReference type="PROSITE" id="PS00125">
    <property type="entry name" value="SER_THR_PHOSPHATASE"/>
    <property type="match status" value="1"/>
</dbReference>
<organism>
    <name type="scientific">Xenopus laevis</name>
    <name type="common">African clawed frog</name>
    <dbReference type="NCBI Taxonomy" id="8355"/>
    <lineage>
        <taxon>Eukaryota</taxon>
        <taxon>Metazoa</taxon>
        <taxon>Chordata</taxon>
        <taxon>Craniata</taxon>
        <taxon>Vertebrata</taxon>
        <taxon>Euteleostomi</taxon>
        <taxon>Amphibia</taxon>
        <taxon>Batrachia</taxon>
        <taxon>Anura</taxon>
        <taxon>Pipoidea</taxon>
        <taxon>Pipidae</taxon>
        <taxon>Xenopodinae</taxon>
        <taxon>Xenopus</taxon>
        <taxon>Xenopus</taxon>
    </lineage>
</organism>
<proteinExistence type="evidence at transcript level"/>
<gene>
    <name type="primary">ppp1cb</name>
</gene>
<evidence type="ECO:0000250" key="1"/>
<evidence type="ECO:0000256" key="2">
    <source>
        <dbReference type="SAM" id="MobiDB-lite"/>
    </source>
</evidence>
<evidence type="ECO:0000305" key="3"/>
<keyword id="KW-0007">Acetylation</keyword>
<keyword id="KW-0119">Carbohydrate metabolism</keyword>
<keyword id="KW-0131">Cell cycle</keyword>
<keyword id="KW-0132">Cell division</keyword>
<keyword id="KW-0963">Cytoplasm</keyword>
<keyword id="KW-0321">Glycogen metabolism</keyword>
<keyword id="KW-0378">Hydrolase</keyword>
<keyword id="KW-0464">Manganese</keyword>
<keyword id="KW-0479">Metal-binding</keyword>
<keyword id="KW-0539">Nucleus</keyword>
<keyword id="KW-0904">Protein phosphatase</keyword>
<keyword id="KW-1185">Reference proteome</keyword>
<comment type="function">
    <text evidence="1">Protein phosphatase that associates with over 200 regulatory proteins to form highly specific holoenzymes which dephosphorylate hundreds of biological targets. Protein phosphatase (PP1) is essential for cell division, it participates in the regulation of glycogen metabolism, muscle contractility and protein synthesis. Involved in regulation of ionic conductances and long-term synaptic plasticity (By similarity).</text>
</comment>
<comment type="catalytic activity">
    <reaction>
        <text>O-phospho-L-seryl-[protein] + H2O = L-seryl-[protein] + phosphate</text>
        <dbReference type="Rhea" id="RHEA:20629"/>
        <dbReference type="Rhea" id="RHEA-COMP:9863"/>
        <dbReference type="Rhea" id="RHEA-COMP:11604"/>
        <dbReference type="ChEBI" id="CHEBI:15377"/>
        <dbReference type="ChEBI" id="CHEBI:29999"/>
        <dbReference type="ChEBI" id="CHEBI:43474"/>
        <dbReference type="ChEBI" id="CHEBI:83421"/>
        <dbReference type="EC" id="3.1.3.16"/>
    </reaction>
</comment>
<comment type="catalytic activity">
    <reaction>
        <text>O-phospho-L-threonyl-[protein] + H2O = L-threonyl-[protein] + phosphate</text>
        <dbReference type="Rhea" id="RHEA:47004"/>
        <dbReference type="Rhea" id="RHEA-COMP:11060"/>
        <dbReference type="Rhea" id="RHEA-COMP:11605"/>
        <dbReference type="ChEBI" id="CHEBI:15377"/>
        <dbReference type="ChEBI" id="CHEBI:30013"/>
        <dbReference type="ChEBI" id="CHEBI:43474"/>
        <dbReference type="ChEBI" id="CHEBI:61977"/>
        <dbReference type="EC" id="3.1.3.16"/>
    </reaction>
</comment>
<comment type="cofactor">
    <cofactor evidence="1">
        <name>Mn(2+)</name>
        <dbReference type="ChEBI" id="CHEBI:29035"/>
    </cofactor>
    <text evidence="1">Binds 2 manganese ions per subunit.</text>
</comment>
<comment type="subcellular location">
    <subcellularLocation>
        <location evidence="1">Cytoplasm</location>
    </subcellularLocation>
    <subcellularLocation>
        <location evidence="1">Nucleus</location>
    </subcellularLocation>
</comment>
<comment type="similarity">
    <text evidence="3">Belongs to the PPP phosphatase family. PP-1 subfamily.</text>
</comment>
<reference key="1">
    <citation type="submission" date="2004-06" db="EMBL/GenBank/DDBJ databases">
        <authorList>
            <consortium name="NIH - Xenopus Gene Collection (XGC) project"/>
        </authorList>
    </citation>
    <scope>NUCLEOTIDE SEQUENCE [LARGE SCALE MRNA]</scope>
    <source>
        <tissue>Spleen</tissue>
    </source>
</reference>
<feature type="initiator methionine" description="Removed" evidence="1">
    <location>
        <position position="1"/>
    </location>
</feature>
<feature type="chain" id="PRO_0000293481" description="Serine/threonine-protein phosphatase PP1-beta catalytic subunit">
    <location>
        <begin position="2"/>
        <end position="327"/>
    </location>
</feature>
<feature type="region of interest" description="Disordered" evidence="2">
    <location>
        <begin position="305"/>
        <end position="327"/>
    </location>
</feature>
<feature type="active site" description="Proton donor" evidence="1">
    <location>
        <position position="124"/>
    </location>
</feature>
<feature type="binding site" evidence="1">
    <location>
        <position position="63"/>
    </location>
    <ligand>
        <name>Mn(2+)</name>
        <dbReference type="ChEBI" id="CHEBI:29035"/>
        <label>1</label>
    </ligand>
</feature>
<feature type="binding site" evidence="1">
    <location>
        <position position="65"/>
    </location>
    <ligand>
        <name>Mn(2+)</name>
        <dbReference type="ChEBI" id="CHEBI:29035"/>
        <label>1</label>
    </ligand>
</feature>
<feature type="binding site" evidence="1">
    <location>
        <position position="91"/>
    </location>
    <ligand>
        <name>Mn(2+)</name>
        <dbReference type="ChEBI" id="CHEBI:29035"/>
        <label>1</label>
    </ligand>
</feature>
<feature type="binding site" evidence="1">
    <location>
        <position position="91"/>
    </location>
    <ligand>
        <name>Mn(2+)</name>
        <dbReference type="ChEBI" id="CHEBI:29035"/>
        <label>2</label>
    </ligand>
</feature>
<feature type="binding site" evidence="1">
    <location>
        <position position="123"/>
    </location>
    <ligand>
        <name>Mn(2+)</name>
        <dbReference type="ChEBI" id="CHEBI:29035"/>
        <label>2</label>
    </ligand>
</feature>
<feature type="binding site" evidence="1">
    <location>
        <position position="172"/>
    </location>
    <ligand>
        <name>Mn(2+)</name>
        <dbReference type="ChEBI" id="CHEBI:29035"/>
        <label>2</label>
    </ligand>
</feature>
<feature type="binding site" evidence="1">
    <location>
        <position position="247"/>
    </location>
    <ligand>
        <name>Mn(2+)</name>
        <dbReference type="ChEBI" id="CHEBI:29035"/>
        <label>2</label>
    </ligand>
</feature>
<feature type="modified residue" description="N-acetylalanine" evidence="1">
    <location>
        <position position="2"/>
    </location>
</feature>